<reference key="1">
    <citation type="journal article" date="2010" name="Genome Biol. Evol.">
        <title>Continuing evolution of Burkholderia mallei through genome reduction and large-scale rearrangements.</title>
        <authorList>
            <person name="Losada L."/>
            <person name="Ronning C.M."/>
            <person name="DeShazer D."/>
            <person name="Woods D."/>
            <person name="Fedorova N."/>
            <person name="Kim H.S."/>
            <person name="Shabalina S.A."/>
            <person name="Pearson T.R."/>
            <person name="Brinkac L."/>
            <person name="Tan P."/>
            <person name="Nandi T."/>
            <person name="Crabtree J."/>
            <person name="Badger J."/>
            <person name="Beckstrom-Sternberg S."/>
            <person name="Saqib M."/>
            <person name="Schutzer S.E."/>
            <person name="Keim P."/>
            <person name="Nierman W.C."/>
        </authorList>
    </citation>
    <scope>NUCLEOTIDE SEQUENCE [LARGE SCALE GENOMIC DNA]</scope>
    <source>
        <strain>SAVP1</strain>
    </source>
</reference>
<feature type="chain" id="PRO_1000014559" description="Small ribosomal subunit protein bS20">
    <location>
        <begin position="1"/>
        <end position="92"/>
    </location>
</feature>
<feature type="region of interest" description="Disordered" evidence="2">
    <location>
        <begin position="1"/>
        <end position="25"/>
    </location>
</feature>
<protein>
    <recommendedName>
        <fullName evidence="1">Small ribosomal subunit protein bS20</fullName>
    </recommendedName>
    <alternativeName>
        <fullName evidence="3">30S ribosomal protein S20</fullName>
    </alternativeName>
</protein>
<evidence type="ECO:0000255" key="1">
    <source>
        <dbReference type="HAMAP-Rule" id="MF_00500"/>
    </source>
</evidence>
<evidence type="ECO:0000256" key="2">
    <source>
        <dbReference type="SAM" id="MobiDB-lite"/>
    </source>
</evidence>
<evidence type="ECO:0000305" key="3"/>
<keyword id="KW-0687">Ribonucleoprotein</keyword>
<keyword id="KW-0689">Ribosomal protein</keyword>
<keyword id="KW-0694">RNA-binding</keyword>
<keyword id="KW-0699">rRNA-binding</keyword>
<organism>
    <name type="scientific">Burkholderia mallei (strain SAVP1)</name>
    <dbReference type="NCBI Taxonomy" id="320388"/>
    <lineage>
        <taxon>Bacteria</taxon>
        <taxon>Pseudomonadati</taxon>
        <taxon>Pseudomonadota</taxon>
        <taxon>Betaproteobacteria</taxon>
        <taxon>Burkholderiales</taxon>
        <taxon>Burkholderiaceae</taxon>
        <taxon>Burkholderia</taxon>
        <taxon>pseudomallei group</taxon>
    </lineage>
</organism>
<accession>A1V1C0</accession>
<name>RS20_BURMS</name>
<gene>
    <name evidence="1" type="primary">rpsT</name>
    <name type="ordered locus">BMASAVP1_A0677</name>
</gene>
<sequence>MANSAQARKRARQAAKANSHNSALRSKFRTAIKAVRKAIDAGDQAKAAELFKAATKTIDTIADKKIVHKNKAARHKSRLSAAVKGLQAQAAQ</sequence>
<dbReference type="EMBL" id="CP000526">
    <property type="protein sequence ID" value="ABM50766.1"/>
    <property type="molecule type" value="Genomic_DNA"/>
</dbReference>
<dbReference type="RefSeq" id="WP_004189743.1">
    <property type="nucleotide sequence ID" value="NC_008785.1"/>
</dbReference>
<dbReference type="SMR" id="A1V1C0"/>
<dbReference type="GeneID" id="93059378"/>
<dbReference type="KEGG" id="bmv:BMASAVP1_A0677"/>
<dbReference type="HOGENOM" id="CLU_160655_4_0_4"/>
<dbReference type="GO" id="GO:0005829">
    <property type="term" value="C:cytosol"/>
    <property type="evidence" value="ECO:0007669"/>
    <property type="project" value="TreeGrafter"/>
</dbReference>
<dbReference type="GO" id="GO:0015935">
    <property type="term" value="C:small ribosomal subunit"/>
    <property type="evidence" value="ECO:0007669"/>
    <property type="project" value="TreeGrafter"/>
</dbReference>
<dbReference type="GO" id="GO:0070181">
    <property type="term" value="F:small ribosomal subunit rRNA binding"/>
    <property type="evidence" value="ECO:0007669"/>
    <property type="project" value="TreeGrafter"/>
</dbReference>
<dbReference type="GO" id="GO:0003735">
    <property type="term" value="F:structural constituent of ribosome"/>
    <property type="evidence" value="ECO:0007669"/>
    <property type="project" value="InterPro"/>
</dbReference>
<dbReference type="GO" id="GO:0006412">
    <property type="term" value="P:translation"/>
    <property type="evidence" value="ECO:0007669"/>
    <property type="project" value="UniProtKB-UniRule"/>
</dbReference>
<dbReference type="FunFam" id="1.20.58.110:FF:000001">
    <property type="entry name" value="30S ribosomal protein S20"/>
    <property type="match status" value="1"/>
</dbReference>
<dbReference type="Gene3D" id="1.20.58.110">
    <property type="entry name" value="Ribosomal protein S20"/>
    <property type="match status" value="1"/>
</dbReference>
<dbReference type="HAMAP" id="MF_00500">
    <property type="entry name" value="Ribosomal_bS20"/>
    <property type="match status" value="1"/>
</dbReference>
<dbReference type="InterPro" id="IPR002583">
    <property type="entry name" value="Ribosomal_bS20"/>
</dbReference>
<dbReference type="InterPro" id="IPR036510">
    <property type="entry name" value="Ribosomal_bS20_sf"/>
</dbReference>
<dbReference type="NCBIfam" id="TIGR00029">
    <property type="entry name" value="S20"/>
    <property type="match status" value="1"/>
</dbReference>
<dbReference type="PANTHER" id="PTHR33398">
    <property type="entry name" value="30S RIBOSOMAL PROTEIN S20"/>
    <property type="match status" value="1"/>
</dbReference>
<dbReference type="PANTHER" id="PTHR33398:SF1">
    <property type="entry name" value="SMALL RIBOSOMAL SUBUNIT PROTEIN BS20C"/>
    <property type="match status" value="1"/>
</dbReference>
<dbReference type="Pfam" id="PF01649">
    <property type="entry name" value="Ribosomal_S20p"/>
    <property type="match status" value="1"/>
</dbReference>
<dbReference type="SUPFAM" id="SSF46992">
    <property type="entry name" value="Ribosomal protein S20"/>
    <property type="match status" value="1"/>
</dbReference>
<comment type="function">
    <text evidence="1">Binds directly to 16S ribosomal RNA.</text>
</comment>
<comment type="similarity">
    <text evidence="1">Belongs to the bacterial ribosomal protein bS20 family.</text>
</comment>
<proteinExistence type="inferred from homology"/>